<gene>
    <name evidence="1" type="primary">rpsM</name>
    <name type="ordered locus">bbp_445</name>
</gene>
<sequence>MARIAGINIANHKHVVVALMDVYGIGKTRSKLICLRTNISESIKILDLTKDQLELLRCEVLKFVVEGDLRREVTLSIKRLQDLNCYRGSRHRKKLPVRGQRTKTNARTRKGPRKLMKK</sequence>
<comment type="function">
    <text evidence="1">Located at the top of the head of the 30S subunit, it contacts several helices of the 16S rRNA. In the 70S ribosome it contacts the 23S rRNA (bridge B1a) and protein L5 of the 50S subunit (bridge B1b), connecting the 2 subunits; these bridges are implicated in subunit movement. Contacts the tRNAs in the A and P-sites.</text>
</comment>
<comment type="subunit">
    <text evidence="1">Part of the 30S ribosomal subunit. Forms a loose heterodimer with protein S19. Forms two bridges to the 50S subunit in the 70S ribosome.</text>
</comment>
<comment type="similarity">
    <text evidence="1">Belongs to the universal ribosomal protein uS13 family.</text>
</comment>
<dbReference type="EMBL" id="AE016826">
    <property type="protein sequence ID" value="AAO27151.1"/>
    <property type="molecule type" value="Genomic_DNA"/>
</dbReference>
<dbReference type="RefSeq" id="WP_011091552.1">
    <property type="nucleotide sequence ID" value="NC_004545.1"/>
</dbReference>
<dbReference type="SMR" id="Q89A87"/>
<dbReference type="STRING" id="224915.bbp_445"/>
<dbReference type="KEGG" id="bab:bbp_445"/>
<dbReference type="eggNOG" id="COG0099">
    <property type="taxonomic scope" value="Bacteria"/>
</dbReference>
<dbReference type="HOGENOM" id="CLU_103849_1_2_6"/>
<dbReference type="OrthoDB" id="9803610at2"/>
<dbReference type="Proteomes" id="UP000000601">
    <property type="component" value="Chromosome"/>
</dbReference>
<dbReference type="GO" id="GO:0005829">
    <property type="term" value="C:cytosol"/>
    <property type="evidence" value="ECO:0007669"/>
    <property type="project" value="TreeGrafter"/>
</dbReference>
<dbReference type="GO" id="GO:0015935">
    <property type="term" value="C:small ribosomal subunit"/>
    <property type="evidence" value="ECO:0007669"/>
    <property type="project" value="TreeGrafter"/>
</dbReference>
<dbReference type="GO" id="GO:0019843">
    <property type="term" value="F:rRNA binding"/>
    <property type="evidence" value="ECO:0007669"/>
    <property type="project" value="UniProtKB-UniRule"/>
</dbReference>
<dbReference type="GO" id="GO:0003735">
    <property type="term" value="F:structural constituent of ribosome"/>
    <property type="evidence" value="ECO:0007669"/>
    <property type="project" value="InterPro"/>
</dbReference>
<dbReference type="GO" id="GO:0000049">
    <property type="term" value="F:tRNA binding"/>
    <property type="evidence" value="ECO:0007669"/>
    <property type="project" value="UniProtKB-UniRule"/>
</dbReference>
<dbReference type="GO" id="GO:0006412">
    <property type="term" value="P:translation"/>
    <property type="evidence" value="ECO:0007669"/>
    <property type="project" value="UniProtKB-UniRule"/>
</dbReference>
<dbReference type="FunFam" id="1.10.8.50:FF:000001">
    <property type="entry name" value="30S ribosomal protein S13"/>
    <property type="match status" value="1"/>
</dbReference>
<dbReference type="Gene3D" id="1.10.8.50">
    <property type="match status" value="1"/>
</dbReference>
<dbReference type="Gene3D" id="4.10.910.10">
    <property type="entry name" value="30s ribosomal protein s13, domain 2"/>
    <property type="match status" value="1"/>
</dbReference>
<dbReference type="HAMAP" id="MF_01315">
    <property type="entry name" value="Ribosomal_uS13"/>
    <property type="match status" value="1"/>
</dbReference>
<dbReference type="InterPro" id="IPR027437">
    <property type="entry name" value="Rbsml_uS13_C"/>
</dbReference>
<dbReference type="InterPro" id="IPR001892">
    <property type="entry name" value="Ribosomal_uS13"/>
</dbReference>
<dbReference type="InterPro" id="IPR010979">
    <property type="entry name" value="Ribosomal_uS13-like_H2TH"/>
</dbReference>
<dbReference type="InterPro" id="IPR019980">
    <property type="entry name" value="Ribosomal_uS13_bac-type"/>
</dbReference>
<dbReference type="InterPro" id="IPR018269">
    <property type="entry name" value="Ribosomal_uS13_CS"/>
</dbReference>
<dbReference type="NCBIfam" id="TIGR03631">
    <property type="entry name" value="uS13_bact"/>
    <property type="match status" value="1"/>
</dbReference>
<dbReference type="PANTHER" id="PTHR10871">
    <property type="entry name" value="30S RIBOSOMAL PROTEIN S13/40S RIBOSOMAL PROTEIN S18"/>
    <property type="match status" value="1"/>
</dbReference>
<dbReference type="PANTHER" id="PTHR10871:SF1">
    <property type="entry name" value="SMALL RIBOSOMAL SUBUNIT PROTEIN US13M"/>
    <property type="match status" value="1"/>
</dbReference>
<dbReference type="Pfam" id="PF00416">
    <property type="entry name" value="Ribosomal_S13"/>
    <property type="match status" value="1"/>
</dbReference>
<dbReference type="PIRSF" id="PIRSF002134">
    <property type="entry name" value="Ribosomal_S13"/>
    <property type="match status" value="1"/>
</dbReference>
<dbReference type="SUPFAM" id="SSF46946">
    <property type="entry name" value="S13-like H2TH domain"/>
    <property type="match status" value="1"/>
</dbReference>
<dbReference type="PROSITE" id="PS00646">
    <property type="entry name" value="RIBOSOMAL_S13_1"/>
    <property type="match status" value="1"/>
</dbReference>
<dbReference type="PROSITE" id="PS50159">
    <property type="entry name" value="RIBOSOMAL_S13_2"/>
    <property type="match status" value="1"/>
</dbReference>
<name>RS13_BUCBP</name>
<evidence type="ECO:0000255" key="1">
    <source>
        <dbReference type="HAMAP-Rule" id="MF_01315"/>
    </source>
</evidence>
<evidence type="ECO:0000256" key="2">
    <source>
        <dbReference type="SAM" id="MobiDB-lite"/>
    </source>
</evidence>
<evidence type="ECO:0000305" key="3"/>
<reference key="1">
    <citation type="journal article" date="2003" name="Proc. Natl. Acad. Sci. U.S.A.">
        <title>Reductive genome evolution in Buchnera aphidicola.</title>
        <authorList>
            <person name="van Ham R.C.H.J."/>
            <person name="Kamerbeek J."/>
            <person name="Palacios C."/>
            <person name="Rausell C."/>
            <person name="Abascal F."/>
            <person name="Bastolla U."/>
            <person name="Fernandez J.M."/>
            <person name="Jimenez L."/>
            <person name="Postigo M."/>
            <person name="Silva F.J."/>
            <person name="Tamames J."/>
            <person name="Viguera E."/>
            <person name="Latorre A."/>
            <person name="Valencia A."/>
            <person name="Moran F."/>
            <person name="Moya A."/>
        </authorList>
    </citation>
    <scope>NUCLEOTIDE SEQUENCE [LARGE SCALE GENOMIC DNA]</scope>
    <source>
        <strain>Bp</strain>
    </source>
</reference>
<keyword id="KW-1185">Reference proteome</keyword>
<keyword id="KW-0687">Ribonucleoprotein</keyword>
<keyword id="KW-0689">Ribosomal protein</keyword>
<keyword id="KW-0694">RNA-binding</keyword>
<keyword id="KW-0699">rRNA-binding</keyword>
<keyword id="KW-0820">tRNA-binding</keyword>
<feature type="chain" id="PRO_0000132074" description="Small ribosomal subunit protein uS13">
    <location>
        <begin position="1"/>
        <end position="118"/>
    </location>
</feature>
<feature type="region of interest" description="Disordered" evidence="2">
    <location>
        <begin position="93"/>
        <end position="118"/>
    </location>
</feature>
<proteinExistence type="inferred from homology"/>
<organism>
    <name type="scientific">Buchnera aphidicola subsp. Baizongia pistaciae (strain Bp)</name>
    <dbReference type="NCBI Taxonomy" id="224915"/>
    <lineage>
        <taxon>Bacteria</taxon>
        <taxon>Pseudomonadati</taxon>
        <taxon>Pseudomonadota</taxon>
        <taxon>Gammaproteobacteria</taxon>
        <taxon>Enterobacterales</taxon>
        <taxon>Erwiniaceae</taxon>
        <taxon>Buchnera</taxon>
    </lineage>
</organism>
<accession>Q89A87</accession>
<protein>
    <recommendedName>
        <fullName evidence="1">Small ribosomal subunit protein uS13</fullName>
    </recommendedName>
    <alternativeName>
        <fullName evidence="3">30S ribosomal protein S13</fullName>
    </alternativeName>
</protein>